<evidence type="ECO:0000255" key="1">
    <source>
        <dbReference type="HAMAP-Rule" id="MF_00165"/>
    </source>
</evidence>
<keyword id="KW-0067">ATP-binding</keyword>
<keyword id="KW-0418">Kinase</keyword>
<keyword id="KW-0545">Nucleotide biosynthesis</keyword>
<keyword id="KW-0547">Nucleotide-binding</keyword>
<keyword id="KW-0808">Transferase</keyword>
<feature type="chain" id="PRO_0000155391" description="Probable thymidylate kinase">
    <location>
        <begin position="1"/>
        <end position="202"/>
    </location>
</feature>
<feature type="binding site" evidence="1">
    <location>
        <begin position="13"/>
        <end position="20"/>
    </location>
    <ligand>
        <name>ATP</name>
        <dbReference type="ChEBI" id="CHEBI:30616"/>
    </ligand>
</feature>
<organism>
    <name type="scientific">Picrophilus torridus (strain ATCC 700027 / DSM 9790 / JCM 10055 / NBRC 100828 / KAW 2/3)</name>
    <dbReference type="NCBI Taxonomy" id="1122961"/>
    <lineage>
        <taxon>Archaea</taxon>
        <taxon>Methanobacteriati</taxon>
        <taxon>Thermoplasmatota</taxon>
        <taxon>Thermoplasmata</taxon>
        <taxon>Thermoplasmatales</taxon>
        <taxon>Picrophilaceae</taxon>
        <taxon>Picrophilus</taxon>
    </lineage>
</organism>
<name>KTHY_PICTO</name>
<comment type="catalytic activity">
    <reaction evidence="1">
        <text>dTMP + ATP = dTDP + ADP</text>
        <dbReference type="Rhea" id="RHEA:13517"/>
        <dbReference type="ChEBI" id="CHEBI:30616"/>
        <dbReference type="ChEBI" id="CHEBI:58369"/>
        <dbReference type="ChEBI" id="CHEBI:63528"/>
        <dbReference type="ChEBI" id="CHEBI:456216"/>
        <dbReference type="EC" id="2.7.4.9"/>
    </reaction>
</comment>
<comment type="similarity">
    <text evidence="1">Belongs to the thymidylate kinase family.</text>
</comment>
<sequence>MIDNGSMFIAIEGIDGSGKTTLAGDIASYTGFYLTREPTDRFCYDYIEADYNDESSIINFFLFTLDRYMHQKEIKNHLINGVISDRYVFSSIAYQGSGMEKRFKNMDETISWMLDVSRFIIMPDLIIYLKIDPGIALKRLNLRKNEKKNTDAFERLEMLKNVSKYYDYIFSGIIKIPVIKINAEMEYNYVKDEAIKGLNDYL</sequence>
<gene>
    <name evidence="1" type="primary">tmk</name>
    <name type="ordered locus">PTO1101</name>
</gene>
<protein>
    <recommendedName>
        <fullName evidence="1">Probable thymidylate kinase</fullName>
        <ecNumber evidence="1">2.7.4.9</ecNumber>
    </recommendedName>
    <alternativeName>
        <fullName evidence="1">dTMP kinase</fullName>
    </alternativeName>
</protein>
<proteinExistence type="inferred from homology"/>
<accession>Q6L016</accession>
<dbReference type="EC" id="2.7.4.9" evidence="1"/>
<dbReference type="EMBL" id="AE017261">
    <property type="protein sequence ID" value="AAT43686.1"/>
    <property type="molecule type" value="Genomic_DNA"/>
</dbReference>
<dbReference type="RefSeq" id="WP_011177902.1">
    <property type="nucleotide sequence ID" value="NC_005877.1"/>
</dbReference>
<dbReference type="SMR" id="Q6L016"/>
<dbReference type="FunCoup" id="Q6L016">
    <property type="interactions" value="103"/>
</dbReference>
<dbReference type="STRING" id="263820.PTO1101"/>
<dbReference type="PaxDb" id="263820-PTO1101"/>
<dbReference type="GeneID" id="2845146"/>
<dbReference type="KEGG" id="pto:PTO1101"/>
<dbReference type="PATRIC" id="fig|263820.9.peg.1141"/>
<dbReference type="eggNOG" id="arCOG01891">
    <property type="taxonomic scope" value="Archaea"/>
</dbReference>
<dbReference type="HOGENOM" id="CLU_049131_1_3_2"/>
<dbReference type="InParanoid" id="Q6L016"/>
<dbReference type="OrthoDB" id="43083at2157"/>
<dbReference type="Proteomes" id="UP000000438">
    <property type="component" value="Chromosome"/>
</dbReference>
<dbReference type="GO" id="GO:0005737">
    <property type="term" value="C:cytoplasm"/>
    <property type="evidence" value="ECO:0007669"/>
    <property type="project" value="TreeGrafter"/>
</dbReference>
<dbReference type="GO" id="GO:0005524">
    <property type="term" value="F:ATP binding"/>
    <property type="evidence" value="ECO:0007669"/>
    <property type="project" value="UniProtKB-UniRule"/>
</dbReference>
<dbReference type="GO" id="GO:0004798">
    <property type="term" value="F:dTMP kinase activity"/>
    <property type="evidence" value="ECO:0007669"/>
    <property type="project" value="UniProtKB-UniRule"/>
</dbReference>
<dbReference type="GO" id="GO:0006233">
    <property type="term" value="P:dTDP biosynthetic process"/>
    <property type="evidence" value="ECO:0007669"/>
    <property type="project" value="InterPro"/>
</dbReference>
<dbReference type="GO" id="GO:0006235">
    <property type="term" value="P:dTTP biosynthetic process"/>
    <property type="evidence" value="ECO:0007669"/>
    <property type="project" value="UniProtKB-UniRule"/>
</dbReference>
<dbReference type="GO" id="GO:0006227">
    <property type="term" value="P:dUDP biosynthetic process"/>
    <property type="evidence" value="ECO:0007669"/>
    <property type="project" value="TreeGrafter"/>
</dbReference>
<dbReference type="CDD" id="cd01672">
    <property type="entry name" value="TMPK"/>
    <property type="match status" value="1"/>
</dbReference>
<dbReference type="Gene3D" id="3.40.50.300">
    <property type="entry name" value="P-loop containing nucleotide triphosphate hydrolases"/>
    <property type="match status" value="1"/>
</dbReference>
<dbReference type="HAMAP" id="MF_00165">
    <property type="entry name" value="Thymidylate_kinase"/>
    <property type="match status" value="1"/>
</dbReference>
<dbReference type="InterPro" id="IPR027417">
    <property type="entry name" value="P-loop_NTPase"/>
</dbReference>
<dbReference type="InterPro" id="IPR039430">
    <property type="entry name" value="Thymidylate_kin-like_dom"/>
</dbReference>
<dbReference type="InterPro" id="IPR018095">
    <property type="entry name" value="Thymidylate_kin_CS"/>
</dbReference>
<dbReference type="InterPro" id="IPR018094">
    <property type="entry name" value="Thymidylate_kinase"/>
</dbReference>
<dbReference type="NCBIfam" id="TIGR00041">
    <property type="entry name" value="DTMP_kinase"/>
    <property type="match status" value="1"/>
</dbReference>
<dbReference type="PANTHER" id="PTHR10344">
    <property type="entry name" value="THYMIDYLATE KINASE"/>
    <property type="match status" value="1"/>
</dbReference>
<dbReference type="PANTHER" id="PTHR10344:SF4">
    <property type="entry name" value="UMP-CMP KINASE 2, MITOCHONDRIAL"/>
    <property type="match status" value="1"/>
</dbReference>
<dbReference type="Pfam" id="PF02223">
    <property type="entry name" value="Thymidylate_kin"/>
    <property type="match status" value="1"/>
</dbReference>
<dbReference type="SUPFAM" id="SSF52540">
    <property type="entry name" value="P-loop containing nucleoside triphosphate hydrolases"/>
    <property type="match status" value="1"/>
</dbReference>
<dbReference type="PROSITE" id="PS01331">
    <property type="entry name" value="THYMIDYLATE_KINASE"/>
    <property type="match status" value="1"/>
</dbReference>
<reference key="1">
    <citation type="journal article" date="2004" name="Proc. Natl. Acad. Sci. U.S.A.">
        <title>Genome sequence of Picrophilus torridus and its implications for life around pH 0.</title>
        <authorList>
            <person name="Fuetterer O."/>
            <person name="Angelov A."/>
            <person name="Liesegang H."/>
            <person name="Gottschalk G."/>
            <person name="Schleper C."/>
            <person name="Schepers B."/>
            <person name="Dock C."/>
            <person name="Antranikian G."/>
            <person name="Liebl W."/>
        </authorList>
    </citation>
    <scope>NUCLEOTIDE SEQUENCE [LARGE SCALE GENOMIC DNA]</scope>
    <source>
        <strain>ATCC 700027 / DSM 9790 / JCM 10055 / NBRC 100828 / KAW 2/3</strain>
    </source>
</reference>